<sequence length="308" mass="31294">MAVLLLGEVTNGALNRDATAKAVAAVKALGDVTVLCAGASAKAAAEEAAKIAGVAKVLVAEDALYGHRLAEPTAALIVGLAGDYSHIAAPATTDAKNVMPRVAALLDVMVLSDVSAILDADTFERPIYAGNAIQVVKSKDAKKVFTIRTASFDAAGEGGTAPVTETAAAADPGLSSWVADEVAESDRPELTSARRVVSGGRGLGSKESFAIIEELADKLGAAVGASRAAVDSGYAPNDWQVGQTGKVVAPELYVAVGISGAIQHLAGMKDSKVIVAINKDEEAPIFQIADYGLVGDLFSVVPELTGKL</sequence>
<protein>
    <recommendedName>
        <fullName>Electron transfer flavoprotein subunit alpha</fullName>
        <shortName>Alpha-ETF</shortName>
    </recommendedName>
    <alternativeName>
        <fullName>Electron transfer flavoprotein large subunit</fullName>
        <shortName>ETFLS</shortName>
    </alternativeName>
</protein>
<feature type="initiator methionine" description="Removed" evidence="2 3">
    <location>
        <position position="1"/>
    </location>
</feature>
<feature type="chain" id="PRO_0000167854" description="Electron transfer flavoprotein subunit alpha">
    <location>
        <begin position="2"/>
        <end position="308"/>
    </location>
</feature>
<feature type="binding site" evidence="1">
    <location>
        <begin position="252"/>
        <end position="280"/>
    </location>
    <ligand>
        <name>FAD</name>
        <dbReference type="ChEBI" id="CHEBI:57692"/>
    </ligand>
</feature>
<feature type="sequence conflict" description="In Ref. 2; AA sequence." evidence="4" ref="2">
    <original>G</original>
    <variation>H</variation>
    <location>
        <position position="220"/>
    </location>
</feature>
<feature type="sequence conflict" description="In Ref. 2; AA sequence." evidence="4" ref="2">
    <location>
        <position position="281"/>
    </location>
</feature>
<feature type="strand" evidence="5">
    <location>
        <begin position="3"/>
        <end position="6"/>
    </location>
</feature>
<feature type="strand" evidence="5">
    <location>
        <begin position="9"/>
        <end position="12"/>
    </location>
</feature>
<feature type="helix" evidence="5">
    <location>
        <begin position="16"/>
        <end position="26"/>
    </location>
</feature>
<feature type="helix" evidence="5">
    <location>
        <begin position="27"/>
        <end position="29"/>
    </location>
</feature>
<feature type="strand" evidence="5">
    <location>
        <begin position="32"/>
        <end position="38"/>
    </location>
</feature>
<feature type="helix" evidence="5">
    <location>
        <begin position="42"/>
        <end position="49"/>
    </location>
</feature>
<feature type="strand" evidence="5">
    <location>
        <begin position="54"/>
        <end position="61"/>
    </location>
</feature>
<feature type="helix" evidence="5">
    <location>
        <begin position="63"/>
        <end position="65"/>
    </location>
</feature>
<feature type="helix" evidence="5">
    <location>
        <begin position="70"/>
        <end position="81"/>
    </location>
</feature>
<feature type="strand" evidence="5">
    <location>
        <begin position="85"/>
        <end position="92"/>
    </location>
</feature>
<feature type="helix" evidence="5">
    <location>
        <begin position="93"/>
        <end position="105"/>
    </location>
</feature>
<feature type="strand" evidence="5">
    <location>
        <begin position="110"/>
        <end position="117"/>
    </location>
</feature>
<feature type="strand" evidence="5">
    <location>
        <begin position="119"/>
        <end position="127"/>
    </location>
</feature>
<feature type="turn" evidence="5">
    <location>
        <begin position="128"/>
        <end position="131"/>
    </location>
</feature>
<feature type="strand" evidence="5">
    <location>
        <begin position="132"/>
        <end position="138"/>
    </location>
</feature>
<feature type="strand" evidence="5">
    <location>
        <begin position="140"/>
        <end position="147"/>
    </location>
</feature>
<feature type="helix" evidence="5">
    <location>
        <begin position="149"/>
        <end position="151"/>
    </location>
</feature>
<feature type="strand" evidence="5">
    <location>
        <begin position="174"/>
        <end position="182"/>
    </location>
</feature>
<feature type="turn" evidence="5">
    <location>
        <begin position="190"/>
        <end position="192"/>
    </location>
</feature>
<feature type="strand" evidence="5">
    <location>
        <begin position="194"/>
        <end position="199"/>
    </location>
</feature>
<feature type="helix" evidence="5">
    <location>
        <begin position="201"/>
        <end position="203"/>
    </location>
</feature>
<feature type="strand" evidence="5">
    <location>
        <begin position="205"/>
        <end position="207"/>
    </location>
</feature>
<feature type="helix" evidence="5">
    <location>
        <begin position="210"/>
        <end position="218"/>
    </location>
</feature>
<feature type="strand" evidence="5">
    <location>
        <begin position="222"/>
        <end position="225"/>
    </location>
</feature>
<feature type="helix" evidence="5">
    <location>
        <begin position="227"/>
        <end position="231"/>
    </location>
</feature>
<feature type="helix" evidence="5">
    <location>
        <begin position="237"/>
        <end position="239"/>
    </location>
</feature>
<feature type="strand" evidence="5">
    <location>
        <begin position="240"/>
        <end position="246"/>
    </location>
</feature>
<feature type="strand" evidence="5">
    <location>
        <begin position="251"/>
        <end position="257"/>
    </location>
</feature>
<feature type="helix" evidence="5">
    <location>
        <begin position="262"/>
        <end position="265"/>
    </location>
</feature>
<feature type="turn" evidence="5">
    <location>
        <begin position="266"/>
        <end position="270"/>
    </location>
</feature>
<feature type="strand" evidence="5">
    <location>
        <begin position="272"/>
        <end position="279"/>
    </location>
</feature>
<feature type="helix" evidence="5">
    <location>
        <begin position="284"/>
        <end position="287"/>
    </location>
</feature>
<feature type="strand" evidence="5">
    <location>
        <begin position="290"/>
        <end position="295"/>
    </location>
</feature>
<feature type="helix" evidence="5">
    <location>
        <begin position="297"/>
        <end position="306"/>
    </location>
</feature>
<evidence type="ECO:0000255" key="1"/>
<evidence type="ECO:0000269" key="2">
    <source>
    </source>
</evidence>
<evidence type="ECO:0000269" key="3">
    <source>
    </source>
</evidence>
<evidence type="ECO:0000305" key="4"/>
<evidence type="ECO:0007829" key="5">
    <source>
        <dbReference type="PDB" id="1EFP"/>
    </source>
</evidence>
<organism>
    <name type="scientific">Paracoccus denitrificans</name>
    <dbReference type="NCBI Taxonomy" id="266"/>
    <lineage>
        <taxon>Bacteria</taxon>
        <taxon>Pseudomonadati</taxon>
        <taxon>Pseudomonadota</taxon>
        <taxon>Alphaproteobacteria</taxon>
        <taxon>Rhodobacterales</taxon>
        <taxon>Paracoccaceae</taxon>
        <taxon>Paracoccus</taxon>
    </lineage>
</organism>
<dbReference type="EMBL" id="L14864">
    <property type="protein sequence ID" value="AAA03072.1"/>
    <property type="molecule type" value="Unassigned_DNA"/>
</dbReference>
<dbReference type="PIR" id="B48008">
    <property type="entry name" value="B48008"/>
</dbReference>
<dbReference type="RefSeq" id="WP_011748831.1">
    <property type="nucleotide sequence ID" value="NZ_JAOSHR010000013.1"/>
</dbReference>
<dbReference type="PDB" id="1EFP">
    <property type="method" value="X-ray"/>
    <property type="resolution" value="2.60 A"/>
    <property type="chains" value="A/C=2-308"/>
</dbReference>
<dbReference type="PDBsum" id="1EFP"/>
<dbReference type="SMR" id="P38974"/>
<dbReference type="DIP" id="DIP-6157N"/>
<dbReference type="IntAct" id="P38974">
    <property type="interactions" value="1"/>
</dbReference>
<dbReference type="OMA" id="WRPYAEQ"/>
<dbReference type="EvolutionaryTrace" id="P38974"/>
<dbReference type="GO" id="GO:0009055">
    <property type="term" value="F:electron transfer activity"/>
    <property type="evidence" value="ECO:0007669"/>
    <property type="project" value="InterPro"/>
</dbReference>
<dbReference type="GO" id="GO:0050660">
    <property type="term" value="F:flavin adenine dinucleotide binding"/>
    <property type="evidence" value="ECO:0007669"/>
    <property type="project" value="InterPro"/>
</dbReference>
<dbReference type="GO" id="GO:0033539">
    <property type="term" value="P:fatty acid beta-oxidation using acyl-CoA dehydrogenase"/>
    <property type="evidence" value="ECO:0007669"/>
    <property type="project" value="TreeGrafter"/>
</dbReference>
<dbReference type="CDD" id="cd01715">
    <property type="entry name" value="ETF_alpha"/>
    <property type="match status" value="1"/>
</dbReference>
<dbReference type="FunFam" id="3.40.50.1220:FF:000001">
    <property type="entry name" value="Electron transfer flavoprotein, alpha subunit"/>
    <property type="match status" value="1"/>
</dbReference>
<dbReference type="Gene3D" id="3.40.50.620">
    <property type="entry name" value="HUPs"/>
    <property type="match status" value="1"/>
</dbReference>
<dbReference type="Gene3D" id="3.40.50.1220">
    <property type="entry name" value="TPP-binding domain"/>
    <property type="match status" value="1"/>
</dbReference>
<dbReference type="InterPro" id="IPR029035">
    <property type="entry name" value="DHS-like_NAD/FAD-binding_dom"/>
</dbReference>
<dbReference type="InterPro" id="IPR014730">
    <property type="entry name" value="ETF_a/b_N"/>
</dbReference>
<dbReference type="InterPro" id="IPR001308">
    <property type="entry name" value="ETF_a/FixB"/>
</dbReference>
<dbReference type="InterPro" id="IPR033947">
    <property type="entry name" value="ETF_alpha_N"/>
</dbReference>
<dbReference type="InterPro" id="IPR014731">
    <property type="entry name" value="ETF_asu_C"/>
</dbReference>
<dbReference type="InterPro" id="IPR018206">
    <property type="entry name" value="ETF_asu_C_CS"/>
</dbReference>
<dbReference type="InterPro" id="IPR014729">
    <property type="entry name" value="Rossmann-like_a/b/a_fold"/>
</dbReference>
<dbReference type="PANTHER" id="PTHR43153">
    <property type="entry name" value="ELECTRON TRANSFER FLAVOPROTEIN ALPHA"/>
    <property type="match status" value="1"/>
</dbReference>
<dbReference type="PANTHER" id="PTHR43153:SF1">
    <property type="entry name" value="ELECTRON TRANSFER FLAVOPROTEIN SUBUNIT ALPHA, MITOCHONDRIAL"/>
    <property type="match status" value="1"/>
</dbReference>
<dbReference type="Pfam" id="PF01012">
    <property type="entry name" value="ETF"/>
    <property type="match status" value="1"/>
</dbReference>
<dbReference type="Pfam" id="PF00766">
    <property type="entry name" value="ETF_alpha"/>
    <property type="match status" value="1"/>
</dbReference>
<dbReference type="PIRSF" id="PIRSF000089">
    <property type="entry name" value="Electra_flavoP_a"/>
    <property type="match status" value="1"/>
</dbReference>
<dbReference type="SMART" id="SM00893">
    <property type="entry name" value="ETF"/>
    <property type="match status" value="1"/>
</dbReference>
<dbReference type="SUPFAM" id="SSF52402">
    <property type="entry name" value="Adenine nucleotide alpha hydrolases-like"/>
    <property type="match status" value="1"/>
</dbReference>
<dbReference type="SUPFAM" id="SSF52467">
    <property type="entry name" value="DHS-like NAD/FAD-binding domain"/>
    <property type="match status" value="1"/>
</dbReference>
<dbReference type="PROSITE" id="PS00696">
    <property type="entry name" value="ETF_ALPHA"/>
    <property type="match status" value="1"/>
</dbReference>
<gene>
    <name type="primary">etfA</name>
</gene>
<name>ETFA_PARDE</name>
<accession>P38974</accession>
<reference key="1">
    <citation type="journal article" date="1993" name="J. Biol. Chem.">
        <title>Cloning, sequencing, and expression of the genes encoding subunits of Paracoccus denitrificans electron transfer flavoprotein.</title>
        <authorList>
            <person name="Bedzyk L.A."/>
            <person name="Escudero K.W."/>
            <person name="Gill R.E."/>
            <person name="Griffin K.J."/>
            <person name="Frerman F.E."/>
        </authorList>
    </citation>
    <scope>NUCLEOTIDE SEQUENCE [GENOMIC DNA]</scope>
    <scope>PROTEIN SEQUENCE OF 2-8</scope>
    <source>
        <strain>ATCC 13543 / NRRL B-3784 / NRC 449</strain>
    </source>
</reference>
<reference key="2">
    <citation type="journal article" date="1992" name="Eur. J. Biochem.">
        <title>Structural and redox relationships between Paracoccus denitrificans, porcine and human electron-transferring flavoproteins.</title>
        <authorList>
            <person name="Watmough N.J."/>
            <person name="Kiss J."/>
            <person name="Frerman F.E."/>
        </authorList>
    </citation>
    <scope>PROTEIN SEQUENCE OF 2-22; 215-250; 252-270 AND 274-287</scope>
    <source>
        <strain>ATCC 13543 / NRRL B-3784 / NRC 449</strain>
    </source>
</reference>
<reference key="3">
    <citation type="journal article" date="1999" name="Biochemistry">
        <title>Crystal structure of Paracoccus denitrificans electron transfer flavoprotein: structural and electrostatic analysis of a conserved flavin binding domain.</title>
        <authorList>
            <person name="Roberts D.L."/>
            <person name="Salazar D."/>
            <person name="Fulmer J.P."/>
            <person name="Frerman F.E."/>
            <person name="Kim J.-J.P."/>
        </authorList>
    </citation>
    <scope>X-RAY CRYSTALLOGRAPHY (2.6 ANGSTROMS)</scope>
</reference>
<keyword id="KW-0002">3D-structure</keyword>
<keyword id="KW-0903">Direct protein sequencing</keyword>
<keyword id="KW-0249">Electron transport</keyword>
<keyword id="KW-0274">FAD</keyword>
<keyword id="KW-0285">Flavoprotein</keyword>
<keyword id="KW-0813">Transport</keyword>
<comment type="function">
    <text>The electron transfer flavoprotein serves as a specific electron acceptor for other dehydrogenases. It transfers the electrons to the main respiratory chain via ETF-ubiquinone oxidoreductase (ETF dehydrogenase).</text>
</comment>
<comment type="cofactor">
    <cofactor>
        <name>FAD</name>
        <dbReference type="ChEBI" id="CHEBI:57692"/>
    </cofactor>
    <text>Binds 1 FAD per dimer.</text>
</comment>
<comment type="subunit">
    <text>Heterodimer of an alpha and a beta subunit.</text>
</comment>
<comment type="similarity">
    <text evidence="4">Belongs to the ETF alpha-subunit/FixB family.</text>
</comment>
<proteinExistence type="evidence at protein level"/>